<reference key="1">
    <citation type="journal article" date="2005" name="Nucleic Acids Res.">
        <title>Genome dynamics and diversity of Shigella species, the etiologic agents of bacillary dysentery.</title>
        <authorList>
            <person name="Yang F."/>
            <person name="Yang J."/>
            <person name="Zhang X."/>
            <person name="Chen L."/>
            <person name="Jiang Y."/>
            <person name="Yan Y."/>
            <person name="Tang X."/>
            <person name="Wang J."/>
            <person name="Xiong Z."/>
            <person name="Dong J."/>
            <person name="Xue Y."/>
            <person name="Zhu Y."/>
            <person name="Xu X."/>
            <person name="Sun L."/>
            <person name="Chen S."/>
            <person name="Nie H."/>
            <person name="Peng J."/>
            <person name="Xu J."/>
            <person name="Wang Y."/>
            <person name="Yuan Z."/>
            <person name="Wen Y."/>
            <person name="Yao Z."/>
            <person name="Shen Y."/>
            <person name="Qiang B."/>
            <person name="Hou Y."/>
            <person name="Yu J."/>
            <person name="Jin Q."/>
        </authorList>
    </citation>
    <scope>NUCLEOTIDE SEQUENCE [LARGE SCALE GENOMIC DNA]</scope>
    <source>
        <strain>Sb227</strain>
    </source>
</reference>
<sequence>MELLLLSNSTLPGKAWLEHALPLIAEQLQGRRSAVFIPFAGVTQTWDDYTAKTAAVLAPLGVSVTGIHSVVDPVAAIENAEIVIVGGGNTFQLLKQCRERGLLAPITDVVKRGALYIGWSAGANLACPTIRTTNDMPIVDPQGFDALNLFPLQINPHFTNALPEGHKGETREQRIRELLVVAPELTIIGLPEGNWITVSKGHATLGGPNTTYVFKAGEEAVPLEAGHRF</sequence>
<keyword id="KW-0963">Cytoplasm</keyword>
<keyword id="KW-0224">Dipeptidase</keyword>
<keyword id="KW-0378">Hydrolase</keyword>
<keyword id="KW-0645">Protease</keyword>
<keyword id="KW-0720">Serine protease</keyword>
<organism>
    <name type="scientific">Shigella boydii serotype 4 (strain Sb227)</name>
    <dbReference type="NCBI Taxonomy" id="300268"/>
    <lineage>
        <taxon>Bacteria</taxon>
        <taxon>Pseudomonadati</taxon>
        <taxon>Pseudomonadota</taxon>
        <taxon>Gammaproteobacteria</taxon>
        <taxon>Enterobacterales</taxon>
        <taxon>Enterobacteriaceae</taxon>
        <taxon>Shigella</taxon>
    </lineage>
</organism>
<accession>Q31TY2</accession>
<feature type="chain" id="PRO_0000258597" description="Peptidase E">
    <location>
        <begin position="1"/>
        <end position="229"/>
    </location>
</feature>
<feature type="active site" description="Charge relay system" evidence="1">
    <location>
        <position position="120"/>
    </location>
</feature>
<feature type="active site" description="Charge relay system" evidence="1">
    <location>
        <position position="135"/>
    </location>
</feature>
<feature type="active site" description="Charge relay system" evidence="1">
    <location>
        <position position="157"/>
    </location>
</feature>
<protein>
    <recommendedName>
        <fullName evidence="1">Peptidase E</fullName>
        <ecNumber evidence="1">3.4.13.21</ecNumber>
    </recommendedName>
    <alternativeName>
        <fullName evidence="1">Alpha-aspartyl dipeptidase</fullName>
    </alternativeName>
    <alternativeName>
        <fullName evidence="1">Asp-specific dipeptidase</fullName>
    </alternativeName>
    <alternativeName>
        <fullName evidence="1">Dipeptidase E</fullName>
    </alternativeName>
</protein>
<comment type="function">
    <text evidence="1">Hydrolyzes dipeptides containing N-terminal aspartate residues. May play a role in allowing the cell to use peptide aspartate to spare carbon otherwise required for the synthesis of the aspartate family of amino acids.</text>
</comment>
<comment type="catalytic activity">
    <reaction evidence="1">
        <text>Dipeptidase E catalyzes the hydrolysis of dipeptides Asp-|-Xaa. It does not act on peptides with N-terminal Glu, Asn or Gln, nor does it cleave isoaspartyl peptides.</text>
        <dbReference type="EC" id="3.4.13.21"/>
    </reaction>
</comment>
<comment type="subcellular location">
    <subcellularLocation>
        <location evidence="1">Cytoplasm</location>
    </subcellularLocation>
</comment>
<comment type="similarity">
    <text evidence="1">Belongs to the peptidase S51 family.</text>
</comment>
<proteinExistence type="inferred from homology"/>
<dbReference type="EC" id="3.4.13.21" evidence="1"/>
<dbReference type="EMBL" id="CP000036">
    <property type="protein sequence ID" value="ABB68476.1"/>
    <property type="molecule type" value="Genomic_DNA"/>
</dbReference>
<dbReference type="RefSeq" id="WP_000421763.1">
    <property type="nucleotide sequence ID" value="NC_007613.1"/>
</dbReference>
<dbReference type="SMR" id="Q31TY2"/>
<dbReference type="MEROPS" id="S51.001"/>
<dbReference type="GeneID" id="93777874"/>
<dbReference type="KEGG" id="sbo:SBO_4042"/>
<dbReference type="HOGENOM" id="CLU_071689_0_0_6"/>
<dbReference type="Proteomes" id="UP000007067">
    <property type="component" value="Chromosome"/>
</dbReference>
<dbReference type="GO" id="GO:0005737">
    <property type="term" value="C:cytoplasm"/>
    <property type="evidence" value="ECO:0007669"/>
    <property type="project" value="UniProtKB-SubCell"/>
</dbReference>
<dbReference type="GO" id="GO:0016805">
    <property type="term" value="F:dipeptidase activity"/>
    <property type="evidence" value="ECO:0007669"/>
    <property type="project" value="UniProtKB-UniRule"/>
</dbReference>
<dbReference type="GO" id="GO:0008236">
    <property type="term" value="F:serine-type peptidase activity"/>
    <property type="evidence" value="ECO:0007669"/>
    <property type="project" value="UniProtKB-KW"/>
</dbReference>
<dbReference type="GO" id="GO:0006508">
    <property type="term" value="P:proteolysis"/>
    <property type="evidence" value="ECO:0007669"/>
    <property type="project" value="UniProtKB-UniRule"/>
</dbReference>
<dbReference type="CDD" id="cd03146">
    <property type="entry name" value="GAT1_Peptidase_E"/>
    <property type="match status" value="1"/>
</dbReference>
<dbReference type="FunFam" id="3.40.50.880:FF:000007">
    <property type="entry name" value="Peptidase E"/>
    <property type="match status" value="1"/>
</dbReference>
<dbReference type="Gene3D" id="3.40.50.880">
    <property type="match status" value="1"/>
</dbReference>
<dbReference type="HAMAP" id="MF_00510">
    <property type="entry name" value="Peptidase_E"/>
    <property type="match status" value="1"/>
</dbReference>
<dbReference type="InterPro" id="IPR029062">
    <property type="entry name" value="Class_I_gatase-like"/>
</dbReference>
<dbReference type="InterPro" id="IPR005320">
    <property type="entry name" value="Peptidase_S51"/>
</dbReference>
<dbReference type="InterPro" id="IPR023172">
    <property type="entry name" value="Peptidase_S51_dipeptidase-E"/>
</dbReference>
<dbReference type="NCBIfam" id="NF003642">
    <property type="entry name" value="PRK05282.1"/>
    <property type="match status" value="1"/>
</dbReference>
<dbReference type="PANTHER" id="PTHR20842:SF0">
    <property type="entry name" value="ALPHA-ASPARTYL DIPEPTIDASE"/>
    <property type="match status" value="1"/>
</dbReference>
<dbReference type="PANTHER" id="PTHR20842">
    <property type="entry name" value="PROTEASE S51 ALPHA-ASPARTYL DIPEPTIDASE"/>
    <property type="match status" value="1"/>
</dbReference>
<dbReference type="Pfam" id="PF03575">
    <property type="entry name" value="Peptidase_S51"/>
    <property type="match status" value="1"/>
</dbReference>
<dbReference type="SUPFAM" id="SSF52317">
    <property type="entry name" value="Class I glutamine amidotransferase-like"/>
    <property type="match status" value="1"/>
</dbReference>
<gene>
    <name evidence="1" type="primary">pepE</name>
    <name type="ordered locus">SBO_4042</name>
</gene>
<evidence type="ECO:0000255" key="1">
    <source>
        <dbReference type="HAMAP-Rule" id="MF_00510"/>
    </source>
</evidence>
<name>PEPE_SHIBS</name>